<reference key="1">
    <citation type="submission" date="2007-06" db="EMBL/GenBank/DDBJ databases">
        <title>Complete sequence of Methanococcus maripaludis C7.</title>
        <authorList>
            <consortium name="US DOE Joint Genome Institute"/>
            <person name="Copeland A."/>
            <person name="Lucas S."/>
            <person name="Lapidus A."/>
            <person name="Barry K."/>
            <person name="Glavina del Rio T."/>
            <person name="Dalin E."/>
            <person name="Tice H."/>
            <person name="Pitluck S."/>
            <person name="Clum A."/>
            <person name="Schmutz J."/>
            <person name="Larimer F."/>
            <person name="Land M."/>
            <person name="Hauser L."/>
            <person name="Kyrpides N."/>
            <person name="Anderson I."/>
            <person name="Sieprawska-Lupa M."/>
            <person name="Whitman W.B."/>
            <person name="Richardson P."/>
        </authorList>
    </citation>
    <scope>NUCLEOTIDE SEQUENCE [LARGE SCALE GENOMIC DNA]</scope>
    <source>
        <strain>C7 / ATCC BAA-1331</strain>
    </source>
</reference>
<comment type="function">
    <text evidence="1">Forms part of the ribosomal stalk which helps the ribosome interact with GTP-bound translation factors.</text>
</comment>
<comment type="subunit">
    <text evidence="1">Part of the ribosomal stalk of the 50S ribosomal subunit. Interacts with L10 and the large rRNA to form the base of the stalk. L10 forms an elongated spine to which L12 dimers bind in a sequential fashion forming a multimeric L10(L12)X complex.</text>
</comment>
<comment type="similarity">
    <text evidence="1">Belongs to the universal ribosomal protein uL11 family.</text>
</comment>
<proteinExistence type="inferred from homology"/>
<gene>
    <name evidence="1" type="primary">rpl11</name>
    <name type="ordered locus">MmarC7_0678</name>
</gene>
<feature type="chain" id="PRO_1000046213" description="Large ribosomal subunit protein uL11">
    <location>
        <begin position="1"/>
        <end position="159"/>
    </location>
</feature>
<evidence type="ECO:0000255" key="1">
    <source>
        <dbReference type="HAMAP-Rule" id="MF_00736"/>
    </source>
</evidence>
<evidence type="ECO:0000305" key="2"/>
<sequence>MAEQVVEILVSGGKATAGPPLGPAIGPLGVNIMQVVQKINEMTKDYDGMSVPVKVIVNTDKRTFEVEVGIPPASALVKKELGITTGSQEPKHQVAGNLTMEQVVKIAKMKQDAMLAYNLKNASKEVIGTCVSVGVNVEGMTPKEAQKAVDAGQFDSYFN</sequence>
<protein>
    <recommendedName>
        <fullName evidence="1">Large ribosomal subunit protein uL11</fullName>
    </recommendedName>
    <alternativeName>
        <fullName evidence="2">50S ribosomal protein L11</fullName>
    </alternativeName>
</protein>
<keyword id="KW-0687">Ribonucleoprotein</keyword>
<keyword id="KW-0689">Ribosomal protein</keyword>
<keyword id="KW-0694">RNA-binding</keyword>
<keyword id="KW-0699">rRNA-binding</keyword>
<accession>A6VH19</accession>
<name>RL11_METM7</name>
<organism>
    <name type="scientific">Methanococcus maripaludis (strain C7 / ATCC BAA-1331)</name>
    <dbReference type="NCBI Taxonomy" id="426368"/>
    <lineage>
        <taxon>Archaea</taxon>
        <taxon>Methanobacteriati</taxon>
        <taxon>Methanobacteriota</taxon>
        <taxon>Methanomada group</taxon>
        <taxon>Methanococci</taxon>
        <taxon>Methanococcales</taxon>
        <taxon>Methanococcaceae</taxon>
        <taxon>Methanococcus</taxon>
    </lineage>
</organism>
<dbReference type="EMBL" id="CP000745">
    <property type="protein sequence ID" value="ABR65745.1"/>
    <property type="molecule type" value="Genomic_DNA"/>
</dbReference>
<dbReference type="SMR" id="A6VH19"/>
<dbReference type="STRING" id="426368.MmarC7_0678"/>
<dbReference type="KEGG" id="mmz:MmarC7_0678"/>
<dbReference type="eggNOG" id="arCOG04372">
    <property type="taxonomic scope" value="Archaea"/>
</dbReference>
<dbReference type="HOGENOM" id="CLU_074237_4_0_2"/>
<dbReference type="OrthoDB" id="8842at2157"/>
<dbReference type="GO" id="GO:0015934">
    <property type="term" value="C:large ribosomal subunit"/>
    <property type="evidence" value="ECO:0007669"/>
    <property type="project" value="TreeGrafter"/>
</dbReference>
<dbReference type="GO" id="GO:0070180">
    <property type="term" value="F:large ribosomal subunit rRNA binding"/>
    <property type="evidence" value="ECO:0007669"/>
    <property type="project" value="UniProtKB-UniRule"/>
</dbReference>
<dbReference type="GO" id="GO:0003735">
    <property type="term" value="F:structural constituent of ribosome"/>
    <property type="evidence" value="ECO:0007669"/>
    <property type="project" value="InterPro"/>
</dbReference>
<dbReference type="GO" id="GO:0006412">
    <property type="term" value="P:translation"/>
    <property type="evidence" value="ECO:0007669"/>
    <property type="project" value="UniProtKB-UniRule"/>
</dbReference>
<dbReference type="CDD" id="cd00349">
    <property type="entry name" value="Ribosomal_L11"/>
    <property type="match status" value="1"/>
</dbReference>
<dbReference type="FunFam" id="1.10.10.250:FF:000006">
    <property type="entry name" value="50S ribosomal protein L11"/>
    <property type="match status" value="1"/>
</dbReference>
<dbReference type="FunFam" id="3.30.1550.10:FF:000007">
    <property type="entry name" value="50S ribosomal protein L11"/>
    <property type="match status" value="1"/>
</dbReference>
<dbReference type="Gene3D" id="1.10.10.250">
    <property type="entry name" value="Ribosomal protein L11, C-terminal domain"/>
    <property type="match status" value="1"/>
</dbReference>
<dbReference type="Gene3D" id="3.30.1550.10">
    <property type="entry name" value="Ribosomal protein L11/L12, N-terminal domain"/>
    <property type="match status" value="1"/>
</dbReference>
<dbReference type="HAMAP" id="MF_00736">
    <property type="entry name" value="Ribosomal_uL11"/>
    <property type="match status" value="1"/>
</dbReference>
<dbReference type="InterPro" id="IPR000911">
    <property type="entry name" value="Ribosomal_uL11"/>
</dbReference>
<dbReference type="InterPro" id="IPR020783">
    <property type="entry name" value="Ribosomal_uL11_C"/>
</dbReference>
<dbReference type="InterPro" id="IPR036769">
    <property type="entry name" value="Ribosomal_uL11_C_sf"/>
</dbReference>
<dbReference type="InterPro" id="IPR020785">
    <property type="entry name" value="Ribosomal_uL11_CS"/>
</dbReference>
<dbReference type="InterPro" id="IPR020784">
    <property type="entry name" value="Ribosomal_uL11_N"/>
</dbReference>
<dbReference type="InterPro" id="IPR036796">
    <property type="entry name" value="Ribosomal_uL11_N_sf"/>
</dbReference>
<dbReference type="NCBIfam" id="NF002232">
    <property type="entry name" value="PRK01143.1"/>
    <property type="match status" value="1"/>
</dbReference>
<dbReference type="PANTHER" id="PTHR11661">
    <property type="entry name" value="60S RIBOSOMAL PROTEIN L12"/>
    <property type="match status" value="1"/>
</dbReference>
<dbReference type="PANTHER" id="PTHR11661:SF1">
    <property type="entry name" value="LARGE RIBOSOMAL SUBUNIT PROTEIN UL11M"/>
    <property type="match status" value="1"/>
</dbReference>
<dbReference type="Pfam" id="PF00298">
    <property type="entry name" value="Ribosomal_L11"/>
    <property type="match status" value="1"/>
</dbReference>
<dbReference type="Pfam" id="PF03946">
    <property type="entry name" value="Ribosomal_L11_N"/>
    <property type="match status" value="1"/>
</dbReference>
<dbReference type="SMART" id="SM00649">
    <property type="entry name" value="RL11"/>
    <property type="match status" value="1"/>
</dbReference>
<dbReference type="SUPFAM" id="SSF54747">
    <property type="entry name" value="Ribosomal L11/L12e N-terminal domain"/>
    <property type="match status" value="1"/>
</dbReference>
<dbReference type="SUPFAM" id="SSF46906">
    <property type="entry name" value="Ribosomal protein L11, C-terminal domain"/>
    <property type="match status" value="1"/>
</dbReference>
<dbReference type="PROSITE" id="PS00359">
    <property type="entry name" value="RIBOSOMAL_L11"/>
    <property type="match status" value="1"/>
</dbReference>